<name>BLH1_YEAS6</name>
<keyword id="KW-0024">Alternative initiation</keyword>
<keyword id="KW-0963">Cytoplasm</keyword>
<keyword id="KW-0238">DNA-binding</keyword>
<keyword id="KW-0378">Hydrolase</keyword>
<keyword id="KW-0496">Mitochondrion</keyword>
<keyword id="KW-0645">Protease</keyword>
<keyword id="KW-0788">Thiol protease</keyword>
<keyword id="KW-0809">Transit peptide</keyword>
<gene>
    <name type="primary">LAP3</name>
    <name type="synonym">BLH1</name>
    <name type="synonym">GAL6</name>
    <name type="synonym">YCP1</name>
    <name type="ORF">AWRI1631_140900</name>
</gene>
<proteinExistence type="inferred from homology"/>
<feature type="transit peptide" description="Mitochondrion" evidence="2">
    <location>
        <begin position="1"/>
        <end position="30"/>
    </location>
</feature>
<feature type="chain" id="PRO_0000393304" description="Cysteine proteinase 1, mitochondrial">
    <location>
        <begin position="31"/>
        <end position="482"/>
    </location>
</feature>
<feature type="propeptide" id="PRO_0000393305" description="Removed in mature form; by autocatalysis" evidence="1">
    <location>
        <position position="483"/>
    </location>
</feature>
<feature type="active site" evidence="1">
    <location>
        <position position="102"/>
    </location>
</feature>
<feature type="active site" evidence="1">
    <location>
        <position position="398"/>
    </location>
</feature>
<feature type="active site" evidence="1">
    <location>
        <position position="421"/>
    </location>
</feature>
<feature type="splice variant" id="VSP_038913" description="In isoform Cytoplasmic." evidence="5">
    <location>
        <begin position="1"/>
        <end position="29"/>
    </location>
</feature>
<accession>B5VQH0</accession>
<protein>
    <recommendedName>
        <fullName>Cysteine proteinase 1, mitochondrial</fullName>
        <ecNumber>3.4.22.40</ecNumber>
    </recommendedName>
    <alternativeName>
        <fullName>Bleomycin hydrolase</fullName>
        <shortName>BLM hydrolase</shortName>
    </alternativeName>
    <alternativeName>
        <fullName>Homocysteine-thiolactonase</fullName>
        <shortName>HTLase</shortName>
        <shortName>Hcy-thiolactonase</shortName>
    </alternativeName>
    <alternativeName>
        <fullName>Leucine aminopeptidase 3</fullName>
    </alternativeName>
    <alternativeName>
        <fullName>Y3</fullName>
    </alternativeName>
</protein>
<dbReference type="EC" id="3.4.22.40"/>
<dbReference type="EMBL" id="ABSV01001965">
    <property type="protein sequence ID" value="EDZ69819.1"/>
    <property type="molecule type" value="Genomic_DNA"/>
</dbReference>
<dbReference type="SMR" id="B5VQH0"/>
<dbReference type="OrthoDB" id="16121at4893"/>
<dbReference type="Proteomes" id="UP000008988">
    <property type="component" value="Unassembled WGS sequence"/>
</dbReference>
<dbReference type="GO" id="GO:0005739">
    <property type="term" value="C:mitochondrion"/>
    <property type="evidence" value="ECO:0007669"/>
    <property type="project" value="UniProtKB-SubCell"/>
</dbReference>
<dbReference type="GO" id="GO:0070005">
    <property type="term" value="F:cysteine-type aminopeptidase activity"/>
    <property type="evidence" value="ECO:0007669"/>
    <property type="project" value="InterPro"/>
</dbReference>
<dbReference type="GO" id="GO:0004197">
    <property type="term" value="F:cysteine-type endopeptidase activity"/>
    <property type="evidence" value="ECO:0007669"/>
    <property type="project" value="UniProtKB-EC"/>
</dbReference>
<dbReference type="GO" id="GO:0003677">
    <property type="term" value="F:DNA binding"/>
    <property type="evidence" value="ECO:0007669"/>
    <property type="project" value="UniProtKB-KW"/>
</dbReference>
<dbReference type="GO" id="GO:0043418">
    <property type="term" value="P:homocysteine catabolic process"/>
    <property type="evidence" value="ECO:0007669"/>
    <property type="project" value="TreeGrafter"/>
</dbReference>
<dbReference type="GO" id="GO:0006508">
    <property type="term" value="P:proteolysis"/>
    <property type="evidence" value="ECO:0007669"/>
    <property type="project" value="UniProtKB-KW"/>
</dbReference>
<dbReference type="GO" id="GO:0009636">
    <property type="term" value="P:response to toxic substance"/>
    <property type="evidence" value="ECO:0007669"/>
    <property type="project" value="TreeGrafter"/>
</dbReference>
<dbReference type="CDD" id="cd00585">
    <property type="entry name" value="Peptidase_C1B"/>
    <property type="match status" value="1"/>
</dbReference>
<dbReference type="FunFam" id="3.90.70.10:FF:000091">
    <property type="entry name" value="Aminopeptidase C"/>
    <property type="match status" value="1"/>
</dbReference>
<dbReference type="Gene3D" id="3.90.70.10">
    <property type="entry name" value="Cysteine proteinases"/>
    <property type="match status" value="1"/>
</dbReference>
<dbReference type="InterPro" id="IPR038765">
    <property type="entry name" value="Papain-like_cys_pep_sf"/>
</dbReference>
<dbReference type="InterPro" id="IPR000169">
    <property type="entry name" value="Pept_cys_AS"/>
</dbReference>
<dbReference type="InterPro" id="IPR025660">
    <property type="entry name" value="Pept_his_AS"/>
</dbReference>
<dbReference type="InterPro" id="IPR004134">
    <property type="entry name" value="Peptidase_C1B"/>
</dbReference>
<dbReference type="PANTHER" id="PTHR10363">
    <property type="entry name" value="BLEOMYCIN HYDROLASE"/>
    <property type="match status" value="1"/>
</dbReference>
<dbReference type="PANTHER" id="PTHR10363:SF2">
    <property type="entry name" value="BLEOMYCIN HYDROLASE"/>
    <property type="match status" value="1"/>
</dbReference>
<dbReference type="Pfam" id="PF03051">
    <property type="entry name" value="Peptidase_C1_2"/>
    <property type="match status" value="1"/>
</dbReference>
<dbReference type="PIRSF" id="PIRSF005700">
    <property type="entry name" value="PepC"/>
    <property type="match status" value="1"/>
</dbReference>
<dbReference type="SUPFAM" id="SSF54001">
    <property type="entry name" value="Cysteine proteinases"/>
    <property type="match status" value="1"/>
</dbReference>
<dbReference type="PROSITE" id="PS00139">
    <property type="entry name" value="THIOL_PROTEASE_CYS"/>
    <property type="match status" value="1"/>
</dbReference>
<dbReference type="PROSITE" id="PS00639">
    <property type="entry name" value="THIOL_PROTEASE_HIS"/>
    <property type="match status" value="1"/>
</dbReference>
<reference key="1">
    <citation type="journal article" date="2008" name="FEMS Yeast Res.">
        <title>Comparative genome analysis of a Saccharomyces cerevisiae wine strain.</title>
        <authorList>
            <person name="Borneman A.R."/>
            <person name="Forgan A.H."/>
            <person name="Pretorius I.S."/>
            <person name="Chambers P.J."/>
        </authorList>
    </citation>
    <scope>NUCLEOTIDE SEQUENCE [LARGE SCALE GENOMIC DNA]</scope>
    <source>
        <strain>AWRI1631</strain>
    </source>
</reference>
<evidence type="ECO:0000250" key="1"/>
<evidence type="ECO:0000255" key="2"/>
<evidence type="ECO:0000255" key="3">
    <source>
        <dbReference type="PROSITE-ProRule" id="PRU10088"/>
    </source>
</evidence>
<evidence type="ECO:0000255" key="4">
    <source>
        <dbReference type="PROSITE-ProRule" id="PRU10089"/>
    </source>
</evidence>
<evidence type="ECO:0000305" key="5"/>
<organism>
    <name type="scientific">Saccharomyces cerevisiae (strain AWRI1631)</name>
    <name type="common">Baker's yeast</name>
    <dbReference type="NCBI Taxonomy" id="545124"/>
    <lineage>
        <taxon>Eukaryota</taxon>
        <taxon>Fungi</taxon>
        <taxon>Dikarya</taxon>
        <taxon>Ascomycota</taxon>
        <taxon>Saccharomycotina</taxon>
        <taxon>Saccharomycetes</taxon>
        <taxon>Saccharomycetales</taxon>
        <taxon>Saccharomycetaceae</taxon>
        <taxon>Saccharomyces</taxon>
    </lineage>
</organism>
<sequence>MLPTSVSRSLYLKTFRSHLLRAPQIVLKRMSSSIDISKINSWNKEFQSDLTHQLATTVLKNYNADDALLNKTRLQKQDNRVFNTVVSTDSTPVTNQKSSGRCWLFAATNQLRLNVLSELNLKEFELSQAYLFFYDKLEKANYFLDQIVSSADQDIDSRLVQYLLAAPTEDGGQYSMFLNLVKKYGLIPKDLYGDLPYSTTASRKWNSLLTTKLREFAETLRTALKERSADDSIIVTLREQMQREIFRLMSLFMDIPPVQPNEQFTWEYVDKDKKIHTIKSTPLEFASKYAKLDPSTPVSLINDPRHPYGKLIKIDRLGNVLGGDAVIYLNVDNETLSKLVVKRLQNNKAVFFGSHTPKFMDKKTGVMDIELWNYPAIGYNLPQQKASRIRYHESLMTHAMLITGCHVDETSKLPLRYRVENSWGKDSGKDGLYVMTQKYFEEYCFQIVVDINELPKELASKFTSGKEEPIVLPIWDPMGALAK</sequence>
<comment type="function">
    <text evidence="1">The normal physiological role of the enzyme is unknown, but it is not essential for the viability of yeast cells. Has aminopeptidase activity, shortening substrate peptides sequentially by 1 amino acid. Has bleomycin hydrolase activity, which can protect the cell from the toxic effects of bleomycin. Has homocysteine-thiolactonase activity, protecting the cell against homocysteine toxicity. Acts as a repressor in the GAL4 regulatory system, but this does not require either the peptidase or nucleic acid-binding activities (By similarity).</text>
</comment>
<comment type="catalytic activity">
    <reaction>
        <text>Inactivates bleomycin B2 (a cytotoxic glycometallopeptide) by hydrolysis of a carboxyamide bond of beta-aminoalanine, but also shows general aminopeptidase activity. The specificity varies somewhat with source, but amino acid arylamides of Met, Leu and Ala are preferred.</text>
        <dbReference type="EC" id="3.4.22.40"/>
    </reaction>
</comment>
<comment type="activity regulation">
    <text evidence="1">Inhibited by E64, a specific inhibitor of cysteine proteases, N-ethylmaleimide, iodacetamide, and mercury and zinc ions.</text>
</comment>
<comment type="subunit">
    <text evidence="1">Homohexamer. Binds to nucleic acids. Binds single-stranded DNA and RNA with higher affinity than double-stranded DNA (By similarity).</text>
</comment>
<comment type="subcellular location">
    <subcellularLocation>
        <location evidence="1">Mitochondrion</location>
    </subcellularLocation>
    <subcellularLocation>
        <location evidence="1">Cytoplasm</location>
    </subcellularLocation>
</comment>
<comment type="alternative products">
    <event type="alternative initiation"/>
    <isoform>
        <id>B5VQH0-1</id>
        <name>Mitochondrial</name>
        <sequence type="displayed"/>
    </isoform>
    <isoform>
        <id>B5VQH0-2</id>
        <name>Cytoplasmic</name>
        <sequence type="described" ref="VSP_038913"/>
    </isoform>
</comment>
<comment type="PTM">
    <text evidence="1">The N-terminus of isoform Cytoplasmic is blocked.</text>
</comment>
<comment type="similarity">
    <text evidence="3 4">Belongs to the peptidase C1 family.</text>
</comment>